<proteinExistence type="evidence at protein level"/>
<sequence>MGISYSVEADPDTTAKAMLRERQMSFKHSKAIAREIKGKTAGEAVDYLEAVIEGDQPVPFKQHNSGVGHKSKVDGWDAGRYPEKASKAFLDLLENAVGNADHQGFDGEAMTIKHVAAHKVGEQQGRKPRAMGRASAWNSPQVDVELILEEPEVED</sequence>
<evidence type="ECO:0000255" key="1">
    <source>
        <dbReference type="HAMAP-Rule" id="MF_01331"/>
    </source>
</evidence>
<evidence type="ECO:0000269" key="2">
    <source>
    </source>
</evidence>
<evidence type="ECO:0000269" key="3">
    <source>
    </source>
</evidence>
<evidence type="ECO:0000269" key="4">
    <source>
    </source>
</evidence>
<evidence type="ECO:0000269" key="5">
    <source>
    </source>
</evidence>
<evidence type="ECO:0000305" key="6"/>
<evidence type="ECO:0007829" key="7">
    <source>
        <dbReference type="PDB" id="1VQ8"/>
    </source>
</evidence>
<name>RL22_HALMA</name>
<reference key="1">
    <citation type="journal article" date="1990" name="J. Biol. Chem.">
        <title>Organization and nucleotide sequence of a gene cluster coding for eight ribosomal proteins in the archaebacterium Halobacterium marismortui.</title>
        <authorList>
            <person name="Arndt E."/>
            <person name="Kroemer W."/>
            <person name="Hatakeyama T."/>
        </authorList>
    </citation>
    <scope>NUCLEOTIDE SEQUENCE [GENOMIC DNA]</scope>
</reference>
<reference key="2">
    <citation type="journal article" date="2004" name="Genome Res.">
        <title>Genome sequence of Haloarcula marismortui: a halophilic archaeon from the Dead Sea.</title>
        <authorList>
            <person name="Baliga N.S."/>
            <person name="Bonneau R."/>
            <person name="Facciotti M.T."/>
            <person name="Pan M."/>
            <person name="Glusman G."/>
            <person name="Deutsch E.W."/>
            <person name="Shannon P."/>
            <person name="Chiu Y."/>
            <person name="Weng R.S."/>
            <person name="Gan R.R."/>
            <person name="Hung P."/>
            <person name="Date S.V."/>
            <person name="Marcotte E."/>
            <person name="Hood L."/>
            <person name="Ng W.V."/>
        </authorList>
    </citation>
    <scope>NUCLEOTIDE SEQUENCE [LARGE SCALE GENOMIC DNA]</scope>
    <source>
        <strain>ATCC 43049 / DSM 3752 / JCM 8966 / VKM B-1809</strain>
    </source>
</reference>
<reference key="3">
    <citation type="journal article" date="1988" name="FEBS Lett.">
        <title>The primary structures of ribosomal proteins L16, L23 and L33 from the archaebacterium Halobacterium marismortui.</title>
        <authorList>
            <person name="Hatakeyama T."/>
            <person name="Hatakeyama T."/>
            <person name="Kimura M."/>
        </authorList>
    </citation>
    <scope>PROTEIN SEQUENCE OF 2-155</scope>
</reference>
<reference key="4">
    <citation type="journal article" date="1988" name="Biochemistry">
        <title>Extended N-terminal sequencing of proteins of archaebacterial ribosomes blotted from two-dimensional gels onto glass fiber and poly(vinylidene difluoride) membrane.</title>
        <authorList>
            <person name="Walsh M.J."/>
            <person name="McDougall J."/>
            <person name="Wittmann-Liebold B."/>
        </authorList>
    </citation>
    <scope>PROTEIN SEQUENCE OF 2-27</scope>
</reference>
<reference key="5">
    <citation type="journal article" date="2000" name="Science">
        <title>The complete atomic structure of the large ribosomal subunit at 2.4 A resolution.</title>
        <authorList>
            <person name="Ban N."/>
            <person name="Nissen P."/>
            <person name="Hansen J."/>
            <person name="Moore P.B."/>
            <person name="Steitz T.A."/>
        </authorList>
    </citation>
    <scope>X-RAY CRYSTALLOGRAPHY (2.4 ANGSTROMS) OF THE 50S SUBUNIT</scope>
    <source>
        <strain>ATCC 43049 / DSM 3752 / JCM 8966 / VKM B-1809</strain>
    </source>
</reference>
<reference key="6">
    <citation type="journal article" date="2000" name="Science">
        <title>The structural basis of ribosome activity in peptide bond synthesis.</title>
        <authorList>
            <person name="Nissen P."/>
            <person name="Hansen J."/>
            <person name="Ban N."/>
            <person name="Moore P.B."/>
            <person name="Steitz T.A."/>
        </authorList>
    </citation>
    <scope>X-RAY CRYSTALLOGRAPHY (3.0 ANGSTROMS) OF THE 50S SUBUNIT</scope>
    <source>
        <strain>ATCC 43049 / DSM 3752 / JCM 8966 / VKM B-1809</strain>
    </source>
</reference>
<reference key="7">
    <citation type="journal article" date="2002" name="Nat. Struct. Biol.">
        <title>A pre-translocational intermediate in protein synthesis observed in crystals of enzymatically active 50S subunits.</title>
        <authorList>
            <person name="Schmeing T.M."/>
            <person name="Seila A.C."/>
            <person name="Hansen J.L."/>
            <person name="Freeborn B."/>
            <person name="Soukup J.K."/>
            <person name="Scaringe S.A."/>
            <person name="Strobel S.A."/>
            <person name="Moore P.B."/>
            <person name="Steitz T.A."/>
        </authorList>
    </citation>
    <scope>X-RAY CRYSTALLOGRAPHY (3.1 ANGSTROMS) OF THE 50S SUBUNIT</scope>
    <source>
        <strain>ATCC 43049 / DSM 3752 / JCM 8966 / VKM B-1809</strain>
    </source>
</reference>
<reference key="8">
    <citation type="journal article" date="2001" name="EMBO J.">
        <title>The kink-turn: a new RNA secondary structure motif.</title>
        <authorList>
            <person name="Klein D.J."/>
            <person name="Schmeing T.M."/>
            <person name="Moore P.B."/>
            <person name="Steitz T.A."/>
        </authorList>
    </citation>
    <scope>X-RAY CRYSTALLOGRAPHY (2.4 ANGSTROMS) OF THE 50S SUBUNIT</scope>
    <source>
        <strain>ATCC 43049 / DSM 3752 / JCM 8966 / VKM B-1809</strain>
    </source>
</reference>
<reference key="9">
    <citation type="journal article" date="2002" name="Mol. Cell">
        <title>The structures of four macrolide antibiotics bound to the large ribosomal subunit.</title>
        <authorList>
            <person name="Hansen J.L."/>
            <person name="Ippolito J.A."/>
            <person name="Ban N."/>
            <person name="Nissen P."/>
            <person name="Moore P.B."/>
            <person name="Steitz T.A."/>
        </authorList>
    </citation>
    <scope>X-RAY CRYSTALLOGRAPHY (3.0 ANGSTROMS) OF THE 50S SUBUNIT IN COMPLEX WITH FOUR MACROLIDE ANTIBIOTICS</scope>
    <source>
        <strain>ATCC 43049 / DSM 3752 / JCM 8966 / VKM B-1809</strain>
    </source>
</reference>
<reference key="10">
    <citation type="journal article" date="2002" name="Proc. Natl. Acad. Sci. U.S.A.">
        <title>Structural insights into peptide bond formation.</title>
        <authorList>
            <person name="Hansen J.L."/>
            <person name="Schmeing T.M."/>
            <person name="Moore P.B."/>
            <person name="Steitz T.A."/>
        </authorList>
    </citation>
    <scope>X-RAY CRYSTALLOGRAPHY (2.8 ANGSTROMS) OF THE 50S SUBUNIT</scope>
    <source>
        <strain>ATCC 43049 / DSM 3752 / JCM 8966 / VKM B-1809</strain>
    </source>
</reference>
<reference key="11">
    <citation type="journal article" date="2003" name="J. Mol. Biol.">
        <title>Structures of five antibiotics bound at the peptidyl transferase center of the large ribosomal subunit.</title>
        <authorList>
            <person name="Hansen J.L."/>
            <person name="Moore P.B."/>
            <person name="Steitz T.A."/>
        </authorList>
    </citation>
    <scope>X-RAY CRYSTALLOGRAPHY (3.0 ANGSTROMS) OF THE 50S SUBUNIT IN COMPLEX WITH FIVE ANTIBIOTICS AT THE PEPTIDYL TRANSFERASE CENTER</scope>
    <source>
        <strain>ATCC 43049 / DSM 3752 / JCM 8966 / VKM B-1809</strain>
    </source>
</reference>
<reference key="12">
    <citation type="journal article" date="2003" name="RNA">
        <title>Structures of deacylated tRNA mimics bound to the E site of the large ribosomal subunit.</title>
        <authorList>
            <person name="Schmeing T.M."/>
            <person name="Moore P.B."/>
            <person name="Steitz T.A."/>
        </authorList>
    </citation>
    <scope>X-RAY CRYSTALLOGRAPHY (2.9 ANGSTROMS) OF THE 50S SUBUNIT WITH TWO DIFFERENT E SITE SUBSTRATES</scope>
</reference>
<reference key="13">
    <citation type="journal article" date="2013" name="Acta Crystallogr. D">
        <title>Revisiting the Haloarcula marismortui 50S ribosomal subunit model.</title>
        <authorList>
            <person name="Gabdulkhakov A."/>
            <person name="Nikonov S."/>
            <person name="Garber M."/>
        </authorList>
    </citation>
    <scope>X-RAY CRYSTALLOGRAPHY (2.4 ANGSTROMS) OF THE 50S SUBUNIT</scope>
</reference>
<feature type="initiator methionine" description="Removed" evidence="4 5">
    <location>
        <position position="1"/>
    </location>
</feature>
<feature type="chain" id="PRO_0000125272" description="Large ribosomal subunit protein uL22">
    <location>
        <begin position="2"/>
        <end position="155"/>
    </location>
</feature>
<feature type="helix" evidence="7">
    <location>
        <begin position="11"/>
        <end position="13"/>
    </location>
</feature>
<feature type="strand" evidence="7">
    <location>
        <begin position="14"/>
        <end position="22"/>
    </location>
</feature>
<feature type="helix" evidence="7">
    <location>
        <begin position="26"/>
        <end position="36"/>
    </location>
</feature>
<feature type="helix" evidence="7">
    <location>
        <begin position="41"/>
        <end position="52"/>
    </location>
</feature>
<feature type="strand" evidence="7">
    <location>
        <begin position="61"/>
        <end position="63"/>
    </location>
</feature>
<feature type="strand" evidence="7">
    <location>
        <begin position="74"/>
        <end position="80"/>
    </location>
</feature>
<feature type="helix" evidence="7">
    <location>
        <begin position="83"/>
        <end position="102"/>
    </location>
</feature>
<feature type="helix" evidence="7">
    <location>
        <begin position="107"/>
        <end position="109"/>
    </location>
</feature>
<feature type="strand" evidence="7">
    <location>
        <begin position="110"/>
        <end position="123"/>
    </location>
</feature>
<feature type="strand" evidence="7">
    <location>
        <begin position="126"/>
        <end position="128"/>
    </location>
</feature>
<feature type="helix" evidence="7">
    <location>
        <begin position="130"/>
        <end position="132"/>
    </location>
</feature>
<feature type="strand" evidence="7">
    <location>
        <begin position="134"/>
        <end position="136"/>
    </location>
</feature>
<feature type="strand" evidence="7">
    <location>
        <begin position="139"/>
        <end position="149"/>
    </location>
</feature>
<comment type="function">
    <text evidence="1">This protein binds specifically to 23S rRNA. It makes multiple contacts with different domains of the 23S rRNA in the assembled 50S subunit and ribosome.</text>
</comment>
<comment type="function">
    <text>Contacts all 6 domains of the 23S rRNA, helping stabilize their relative orientation. An extended beta-hairpin in the C-terminus forms part of the polypeptide exit tunnel, in which it helps forms a bend with protein L4, while most of the rest of the protein is located at the polypeptide exit tunnel on the outside of the subunit.</text>
</comment>
<comment type="subunit">
    <text evidence="1 2 3">Part of the 50S ribosomal subunit. Contacts the macrolide antibiotic tylosin in the polypeptide exit tunnel.</text>
</comment>
<comment type="similarity">
    <text evidence="1">Belongs to the universal ribosomal protein uL22 family.</text>
</comment>
<organism>
    <name type="scientific">Haloarcula marismortui (strain ATCC 43049 / DSM 3752 / JCM 8966 / VKM B-1809)</name>
    <name type="common">Halobacterium marismortui</name>
    <dbReference type="NCBI Taxonomy" id="272569"/>
    <lineage>
        <taxon>Archaea</taxon>
        <taxon>Methanobacteriati</taxon>
        <taxon>Methanobacteriota</taxon>
        <taxon>Stenosarchaea group</taxon>
        <taxon>Halobacteria</taxon>
        <taxon>Halobacteriales</taxon>
        <taxon>Haloarculaceae</taxon>
        <taxon>Haloarcula</taxon>
    </lineage>
</organism>
<gene>
    <name evidence="1" type="primary">rpl22</name>
    <name type="ordered locus">rrnAC1606</name>
</gene>
<keyword id="KW-0002">3D-structure</keyword>
<keyword id="KW-0903">Direct protein sequencing</keyword>
<keyword id="KW-1185">Reference proteome</keyword>
<keyword id="KW-0687">Ribonucleoprotein</keyword>
<keyword id="KW-0689">Ribosomal protein</keyword>
<keyword id="KW-0694">RNA-binding</keyword>
<keyword id="KW-0699">rRNA-binding</keyword>
<dbReference type="EMBL" id="J05222">
    <property type="protein sequence ID" value="AAA86864.1"/>
    <property type="molecule type" value="Genomic_DNA"/>
</dbReference>
<dbReference type="EMBL" id="AY596297">
    <property type="protein sequence ID" value="AAV46523.1"/>
    <property type="molecule type" value="Genomic_DNA"/>
</dbReference>
<dbReference type="PIR" id="H35063">
    <property type="entry name" value="R5HS22"/>
</dbReference>
<dbReference type="RefSeq" id="WP_011223742.1">
    <property type="nucleotide sequence ID" value="NC_006396.1"/>
</dbReference>
<dbReference type="PDB" id="1FFK">
    <property type="method" value="X-ray"/>
    <property type="resolution" value="2.40 A"/>
    <property type="chains" value="O=2-155"/>
</dbReference>
<dbReference type="PDB" id="1JJ2">
    <property type="method" value="X-ray"/>
    <property type="resolution" value="2.40 A"/>
    <property type="chains" value="Q=2-155"/>
</dbReference>
<dbReference type="PDB" id="1K73">
    <property type="method" value="X-ray"/>
    <property type="resolution" value="3.01 A"/>
    <property type="chains" value="S=2-155"/>
</dbReference>
<dbReference type="PDB" id="1K8A">
    <property type="method" value="X-ray"/>
    <property type="resolution" value="3.00 A"/>
    <property type="chains" value="S=2-155"/>
</dbReference>
<dbReference type="PDB" id="1K9M">
    <property type="method" value="X-ray"/>
    <property type="resolution" value="3.00 A"/>
    <property type="chains" value="S=2-155"/>
</dbReference>
<dbReference type="PDB" id="1KC8">
    <property type="method" value="X-ray"/>
    <property type="resolution" value="3.01 A"/>
    <property type="chains" value="S=2-155"/>
</dbReference>
<dbReference type="PDB" id="1KD1">
    <property type="method" value="X-ray"/>
    <property type="resolution" value="3.00 A"/>
    <property type="chains" value="S=2-155"/>
</dbReference>
<dbReference type="PDB" id="1KQS">
    <property type="method" value="X-ray"/>
    <property type="resolution" value="3.10 A"/>
    <property type="chains" value="Q=2-155"/>
</dbReference>
<dbReference type="PDB" id="1M1K">
    <property type="method" value="X-ray"/>
    <property type="resolution" value="3.20 A"/>
    <property type="chains" value="S=2-155"/>
</dbReference>
<dbReference type="PDB" id="1M90">
    <property type="method" value="X-ray"/>
    <property type="resolution" value="2.80 A"/>
    <property type="chains" value="S=2-155"/>
</dbReference>
<dbReference type="PDB" id="1N8R">
    <property type="method" value="X-ray"/>
    <property type="resolution" value="3.00 A"/>
    <property type="chains" value="S=2-155"/>
</dbReference>
<dbReference type="PDB" id="1NJI">
    <property type="method" value="X-ray"/>
    <property type="resolution" value="3.00 A"/>
    <property type="chains" value="S=2-155"/>
</dbReference>
<dbReference type="PDB" id="1Q7Y">
    <property type="method" value="X-ray"/>
    <property type="resolution" value="3.20 A"/>
    <property type="chains" value="S=2-155"/>
</dbReference>
<dbReference type="PDB" id="1Q81">
    <property type="method" value="X-ray"/>
    <property type="resolution" value="2.95 A"/>
    <property type="chains" value="S=2-155"/>
</dbReference>
<dbReference type="PDB" id="1Q82">
    <property type="method" value="X-ray"/>
    <property type="resolution" value="2.98 A"/>
    <property type="chains" value="S=2-155"/>
</dbReference>
<dbReference type="PDB" id="1Q86">
    <property type="method" value="X-ray"/>
    <property type="resolution" value="3.00 A"/>
    <property type="chains" value="S=2-155"/>
</dbReference>
<dbReference type="PDB" id="1QVF">
    <property type="method" value="X-ray"/>
    <property type="resolution" value="3.10 A"/>
    <property type="chains" value="Q=2-155"/>
</dbReference>
<dbReference type="PDB" id="1QVG">
    <property type="method" value="X-ray"/>
    <property type="resolution" value="2.90 A"/>
    <property type="chains" value="Q=2-155"/>
</dbReference>
<dbReference type="PDB" id="1S72">
    <property type="method" value="X-ray"/>
    <property type="resolution" value="2.40 A"/>
    <property type="chains" value="R=1-155"/>
</dbReference>
<dbReference type="PDB" id="1VQ4">
    <property type="method" value="X-ray"/>
    <property type="resolution" value="2.70 A"/>
    <property type="chains" value="R=1-155"/>
</dbReference>
<dbReference type="PDB" id="1VQ5">
    <property type="method" value="X-ray"/>
    <property type="resolution" value="2.60 A"/>
    <property type="chains" value="R=1-155"/>
</dbReference>
<dbReference type="PDB" id="1VQ6">
    <property type="method" value="X-ray"/>
    <property type="resolution" value="2.70 A"/>
    <property type="chains" value="R=1-155"/>
</dbReference>
<dbReference type="PDB" id="1VQ7">
    <property type="method" value="X-ray"/>
    <property type="resolution" value="2.50 A"/>
    <property type="chains" value="R=1-155"/>
</dbReference>
<dbReference type="PDB" id="1VQ8">
    <property type="method" value="X-ray"/>
    <property type="resolution" value="2.20 A"/>
    <property type="chains" value="R=1-155"/>
</dbReference>
<dbReference type="PDB" id="1VQ9">
    <property type="method" value="X-ray"/>
    <property type="resolution" value="2.40 A"/>
    <property type="chains" value="R=1-155"/>
</dbReference>
<dbReference type="PDB" id="1VQK">
    <property type="method" value="X-ray"/>
    <property type="resolution" value="2.30 A"/>
    <property type="chains" value="R=1-155"/>
</dbReference>
<dbReference type="PDB" id="1VQL">
    <property type="method" value="X-ray"/>
    <property type="resolution" value="2.30 A"/>
    <property type="chains" value="R=1-155"/>
</dbReference>
<dbReference type="PDB" id="1VQM">
    <property type="method" value="X-ray"/>
    <property type="resolution" value="2.30 A"/>
    <property type="chains" value="R=1-155"/>
</dbReference>
<dbReference type="PDB" id="1VQN">
    <property type="method" value="X-ray"/>
    <property type="resolution" value="2.40 A"/>
    <property type="chains" value="R=1-155"/>
</dbReference>
<dbReference type="PDB" id="1VQO">
    <property type="method" value="X-ray"/>
    <property type="resolution" value="2.20 A"/>
    <property type="chains" value="R=1-155"/>
</dbReference>
<dbReference type="PDB" id="1VQP">
    <property type="method" value="X-ray"/>
    <property type="resolution" value="2.25 A"/>
    <property type="chains" value="R=1-155"/>
</dbReference>
<dbReference type="PDB" id="1W2B">
    <property type="method" value="X-ray"/>
    <property type="resolution" value="3.50 A"/>
    <property type="chains" value="Q=2-155"/>
</dbReference>
<dbReference type="PDB" id="1YHQ">
    <property type="method" value="X-ray"/>
    <property type="resolution" value="2.40 A"/>
    <property type="chains" value="R=1-155"/>
</dbReference>
<dbReference type="PDB" id="1YI2">
    <property type="method" value="X-ray"/>
    <property type="resolution" value="2.65 A"/>
    <property type="chains" value="R=1-155"/>
</dbReference>
<dbReference type="PDB" id="1YIJ">
    <property type="method" value="X-ray"/>
    <property type="resolution" value="2.60 A"/>
    <property type="chains" value="R=1-155"/>
</dbReference>
<dbReference type="PDB" id="1YIT">
    <property type="method" value="X-ray"/>
    <property type="resolution" value="2.80 A"/>
    <property type="chains" value="R=1-155"/>
</dbReference>
<dbReference type="PDB" id="1YJ9">
    <property type="method" value="X-ray"/>
    <property type="resolution" value="2.80 A"/>
    <property type="chains" value="R=1-152"/>
</dbReference>
<dbReference type="PDB" id="1YJN">
    <property type="method" value="X-ray"/>
    <property type="resolution" value="3.00 A"/>
    <property type="chains" value="R=1-155"/>
</dbReference>
<dbReference type="PDB" id="1YJW">
    <property type="method" value="X-ray"/>
    <property type="resolution" value="2.90 A"/>
    <property type="chains" value="R=1-155"/>
</dbReference>
<dbReference type="PDB" id="2OTJ">
    <property type="method" value="X-ray"/>
    <property type="resolution" value="2.90 A"/>
    <property type="chains" value="R=1-155"/>
</dbReference>
<dbReference type="PDB" id="2OTL">
    <property type="method" value="X-ray"/>
    <property type="resolution" value="2.70 A"/>
    <property type="chains" value="R=1-155"/>
</dbReference>
<dbReference type="PDB" id="2QA4">
    <property type="method" value="X-ray"/>
    <property type="resolution" value="3.00 A"/>
    <property type="chains" value="R=1-155"/>
</dbReference>
<dbReference type="PDB" id="2QEX">
    <property type="method" value="X-ray"/>
    <property type="resolution" value="2.90 A"/>
    <property type="chains" value="R=1-155"/>
</dbReference>
<dbReference type="PDB" id="3CC2">
    <property type="method" value="X-ray"/>
    <property type="resolution" value="2.40 A"/>
    <property type="chains" value="R=1-155"/>
</dbReference>
<dbReference type="PDB" id="3CC4">
    <property type="method" value="X-ray"/>
    <property type="resolution" value="2.70 A"/>
    <property type="chains" value="R=1-155"/>
</dbReference>
<dbReference type="PDB" id="3CC7">
    <property type="method" value="X-ray"/>
    <property type="resolution" value="2.70 A"/>
    <property type="chains" value="R=1-155"/>
</dbReference>
<dbReference type="PDB" id="3CCE">
    <property type="method" value="X-ray"/>
    <property type="resolution" value="2.75 A"/>
    <property type="chains" value="R=1-155"/>
</dbReference>
<dbReference type="PDB" id="3CCJ">
    <property type="method" value="X-ray"/>
    <property type="resolution" value="2.70 A"/>
    <property type="chains" value="R=1-155"/>
</dbReference>
<dbReference type="PDB" id="3CCL">
    <property type="method" value="X-ray"/>
    <property type="resolution" value="2.90 A"/>
    <property type="chains" value="R=1-155"/>
</dbReference>
<dbReference type="PDB" id="3CCM">
    <property type="method" value="X-ray"/>
    <property type="resolution" value="2.55 A"/>
    <property type="chains" value="R=1-155"/>
</dbReference>
<dbReference type="PDB" id="3CCQ">
    <property type="method" value="X-ray"/>
    <property type="resolution" value="2.90 A"/>
    <property type="chains" value="R=1-155"/>
</dbReference>
<dbReference type="PDB" id="3CCR">
    <property type="method" value="X-ray"/>
    <property type="resolution" value="3.00 A"/>
    <property type="chains" value="R=1-155"/>
</dbReference>
<dbReference type="PDB" id="3CCS">
    <property type="method" value="X-ray"/>
    <property type="resolution" value="2.95 A"/>
    <property type="chains" value="R=1-155"/>
</dbReference>
<dbReference type="PDB" id="3CCU">
    <property type="method" value="X-ray"/>
    <property type="resolution" value="2.80 A"/>
    <property type="chains" value="R=1-155"/>
</dbReference>
<dbReference type="PDB" id="3CCV">
    <property type="method" value="X-ray"/>
    <property type="resolution" value="2.90 A"/>
    <property type="chains" value="R=1-155"/>
</dbReference>
<dbReference type="PDB" id="3CD6">
    <property type="method" value="X-ray"/>
    <property type="resolution" value="2.75 A"/>
    <property type="chains" value="R=1-155"/>
</dbReference>
<dbReference type="PDB" id="3CMA">
    <property type="method" value="X-ray"/>
    <property type="resolution" value="2.80 A"/>
    <property type="chains" value="R=1-155"/>
</dbReference>
<dbReference type="PDB" id="3CME">
    <property type="method" value="X-ray"/>
    <property type="resolution" value="2.95 A"/>
    <property type="chains" value="R=1-155"/>
</dbReference>
<dbReference type="PDB" id="3CPW">
    <property type="method" value="X-ray"/>
    <property type="resolution" value="2.70 A"/>
    <property type="chains" value="Q=1-155"/>
</dbReference>
<dbReference type="PDB" id="3CXC">
    <property type="method" value="X-ray"/>
    <property type="resolution" value="3.00 A"/>
    <property type="chains" value="Q=2-155"/>
</dbReference>
<dbReference type="PDB" id="3G4S">
    <property type="method" value="X-ray"/>
    <property type="resolution" value="3.20 A"/>
    <property type="chains" value="R=2-151"/>
</dbReference>
<dbReference type="PDB" id="3G6E">
    <property type="method" value="X-ray"/>
    <property type="resolution" value="2.70 A"/>
    <property type="chains" value="R=2-151"/>
</dbReference>
<dbReference type="PDB" id="3G71">
    <property type="method" value="X-ray"/>
    <property type="resolution" value="2.85 A"/>
    <property type="chains" value="R=2-151"/>
</dbReference>
<dbReference type="PDB" id="3I55">
    <property type="method" value="X-ray"/>
    <property type="resolution" value="3.11 A"/>
    <property type="chains" value="R=1-155"/>
</dbReference>
<dbReference type="PDB" id="3I56">
    <property type="method" value="X-ray"/>
    <property type="resolution" value="2.90 A"/>
    <property type="chains" value="R=1-155"/>
</dbReference>
<dbReference type="PDB" id="3OW2">
    <property type="method" value="X-ray"/>
    <property type="resolution" value="2.70 A"/>
    <property type="chains" value="Q=2-151"/>
</dbReference>
<dbReference type="PDB" id="4ADX">
    <property type="method" value="EM"/>
    <property type="resolution" value="6.60 A"/>
    <property type="chains" value="R=1-155"/>
</dbReference>
<dbReference type="PDB" id="4V9F">
    <property type="method" value="X-ray"/>
    <property type="resolution" value="2.40 A"/>
    <property type="chains" value="R=1-155"/>
</dbReference>
<dbReference type="PDBsum" id="1FFK"/>
<dbReference type="PDBsum" id="1JJ2"/>
<dbReference type="PDBsum" id="1K73"/>
<dbReference type="PDBsum" id="1K8A"/>
<dbReference type="PDBsum" id="1K9M"/>
<dbReference type="PDBsum" id="1KC8"/>
<dbReference type="PDBsum" id="1KD1"/>
<dbReference type="PDBsum" id="1KQS"/>
<dbReference type="PDBsum" id="1M1K"/>
<dbReference type="PDBsum" id="1M90"/>
<dbReference type="PDBsum" id="1N8R"/>
<dbReference type="PDBsum" id="1NJI"/>
<dbReference type="PDBsum" id="1Q7Y"/>
<dbReference type="PDBsum" id="1Q81"/>
<dbReference type="PDBsum" id="1Q82"/>
<dbReference type="PDBsum" id="1Q86"/>
<dbReference type="PDBsum" id="1QVF"/>
<dbReference type="PDBsum" id="1QVG"/>
<dbReference type="PDBsum" id="1S72"/>
<dbReference type="PDBsum" id="1VQ4"/>
<dbReference type="PDBsum" id="1VQ5"/>
<dbReference type="PDBsum" id="1VQ6"/>
<dbReference type="PDBsum" id="1VQ7"/>
<dbReference type="PDBsum" id="1VQ8"/>
<dbReference type="PDBsum" id="1VQ9"/>
<dbReference type="PDBsum" id="1VQK"/>
<dbReference type="PDBsum" id="1VQL"/>
<dbReference type="PDBsum" id="1VQM"/>
<dbReference type="PDBsum" id="1VQN"/>
<dbReference type="PDBsum" id="1VQO"/>
<dbReference type="PDBsum" id="1VQP"/>
<dbReference type="PDBsum" id="1W2B"/>
<dbReference type="PDBsum" id="1YHQ"/>
<dbReference type="PDBsum" id="1YI2"/>
<dbReference type="PDBsum" id="1YIJ"/>
<dbReference type="PDBsum" id="1YIT"/>
<dbReference type="PDBsum" id="1YJ9"/>
<dbReference type="PDBsum" id="1YJN"/>
<dbReference type="PDBsum" id="1YJW"/>
<dbReference type="PDBsum" id="2OTJ"/>
<dbReference type="PDBsum" id="2OTL"/>
<dbReference type="PDBsum" id="2QA4"/>
<dbReference type="PDBsum" id="2QEX"/>
<dbReference type="PDBsum" id="3CC2"/>
<dbReference type="PDBsum" id="3CC4"/>
<dbReference type="PDBsum" id="3CC7"/>
<dbReference type="PDBsum" id="3CCE"/>
<dbReference type="PDBsum" id="3CCJ"/>
<dbReference type="PDBsum" id="3CCL"/>
<dbReference type="PDBsum" id="3CCM"/>
<dbReference type="PDBsum" id="3CCQ"/>
<dbReference type="PDBsum" id="3CCR"/>
<dbReference type="PDBsum" id="3CCS"/>
<dbReference type="PDBsum" id="3CCU"/>
<dbReference type="PDBsum" id="3CCV"/>
<dbReference type="PDBsum" id="3CD6"/>
<dbReference type="PDBsum" id="3CMA"/>
<dbReference type="PDBsum" id="3CME"/>
<dbReference type="PDBsum" id="3CPW"/>
<dbReference type="PDBsum" id="3CXC"/>
<dbReference type="PDBsum" id="3G4S"/>
<dbReference type="PDBsum" id="3G6E"/>
<dbReference type="PDBsum" id="3G71"/>
<dbReference type="PDBsum" id="3I55"/>
<dbReference type="PDBsum" id="3I56"/>
<dbReference type="PDBsum" id="3OW2"/>
<dbReference type="PDBsum" id="4ADX"/>
<dbReference type="PDBsum" id="4V9F"/>
<dbReference type="SMR" id="P10970"/>
<dbReference type="IntAct" id="P10970">
    <property type="interactions" value="2"/>
</dbReference>
<dbReference type="STRING" id="272569.rrnAC1606"/>
<dbReference type="PaxDb" id="272569-rrnAC1606"/>
<dbReference type="EnsemblBacteria" id="AAV46523">
    <property type="protein sequence ID" value="AAV46523"/>
    <property type="gene ID" value="rrnAC1606"/>
</dbReference>
<dbReference type="GeneID" id="40152572"/>
<dbReference type="KEGG" id="hma:rrnAC1606"/>
<dbReference type="PATRIC" id="fig|272569.17.peg.2296"/>
<dbReference type="eggNOG" id="arCOG04098">
    <property type="taxonomic scope" value="Archaea"/>
</dbReference>
<dbReference type="HOGENOM" id="CLU_083987_0_2_2"/>
<dbReference type="EvolutionaryTrace" id="P10970"/>
<dbReference type="Proteomes" id="UP000001169">
    <property type="component" value="Chromosome I"/>
</dbReference>
<dbReference type="GO" id="GO:0022625">
    <property type="term" value="C:cytosolic large ribosomal subunit"/>
    <property type="evidence" value="ECO:0007669"/>
    <property type="project" value="TreeGrafter"/>
</dbReference>
<dbReference type="GO" id="GO:0019843">
    <property type="term" value="F:rRNA binding"/>
    <property type="evidence" value="ECO:0007669"/>
    <property type="project" value="UniProtKB-UniRule"/>
</dbReference>
<dbReference type="GO" id="GO:0003735">
    <property type="term" value="F:structural constituent of ribosome"/>
    <property type="evidence" value="ECO:0007669"/>
    <property type="project" value="InterPro"/>
</dbReference>
<dbReference type="GO" id="GO:0002181">
    <property type="term" value="P:cytoplasmic translation"/>
    <property type="evidence" value="ECO:0007669"/>
    <property type="project" value="TreeGrafter"/>
</dbReference>
<dbReference type="CDD" id="cd00336">
    <property type="entry name" value="Ribosomal_L22"/>
    <property type="match status" value="1"/>
</dbReference>
<dbReference type="Gene3D" id="3.90.470.10">
    <property type="entry name" value="Ribosomal protein L22/L17"/>
    <property type="match status" value="1"/>
</dbReference>
<dbReference type="HAMAP" id="MF_01331_A">
    <property type="entry name" value="Ribosomal_uL22_A"/>
    <property type="match status" value="1"/>
</dbReference>
<dbReference type="InterPro" id="IPR001063">
    <property type="entry name" value="Ribosomal_uL22"/>
</dbReference>
<dbReference type="InterPro" id="IPR018260">
    <property type="entry name" value="Ribosomal_uL22_CS"/>
</dbReference>
<dbReference type="InterPro" id="IPR005721">
    <property type="entry name" value="Ribosomal_uL22_euk/arc"/>
</dbReference>
<dbReference type="InterPro" id="IPR036394">
    <property type="entry name" value="Ribosomal_uL22_sf"/>
</dbReference>
<dbReference type="NCBIfam" id="NF003260">
    <property type="entry name" value="PRK04223.1"/>
    <property type="match status" value="1"/>
</dbReference>
<dbReference type="NCBIfam" id="TIGR01038">
    <property type="entry name" value="uL22_arch_euk"/>
    <property type="match status" value="1"/>
</dbReference>
<dbReference type="PANTHER" id="PTHR11593">
    <property type="entry name" value="60S RIBOSOMAL PROTEIN L17"/>
    <property type="match status" value="1"/>
</dbReference>
<dbReference type="PANTHER" id="PTHR11593:SF10">
    <property type="entry name" value="60S RIBOSOMAL PROTEIN L17"/>
    <property type="match status" value="1"/>
</dbReference>
<dbReference type="Pfam" id="PF00237">
    <property type="entry name" value="Ribosomal_L22"/>
    <property type="match status" value="1"/>
</dbReference>
<dbReference type="SUPFAM" id="SSF54843">
    <property type="entry name" value="Ribosomal protein L22"/>
    <property type="match status" value="1"/>
</dbReference>
<dbReference type="PROSITE" id="PS00464">
    <property type="entry name" value="RIBOSOMAL_L22"/>
    <property type="match status" value="1"/>
</dbReference>
<protein>
    <recommendedName>
        <fullName evidence="1">Large ribosomal subunit protein uL22</fullName>
    </recommendedName>
    <alternativeName>
        <fullName evidence="6">50S ribosomal protein L22</fullName>
    </alternativeName>
    <alternativeName>
        <fullName>Hl23</fullName>
    </alternativeName>
    <alternativeName>
        <fullName>Hmal22</fullName>
    </alternativeName>
</protein>
<accession>P10970</accession>
<accession>Q5V1S9</accession>